<evidence type="ECO:0000255" key="1">
    <source>
        <dbReference type="HAMAP-Rule" id="MF_01815"/>
    </source>
</evidence>
<accession>A0AKV5</accession>
<gene>
    <name evidence="1" type="primary">fabH</name>
    <name type="ordered locus">lwe2219</name>
</gene>
<sequence>MNAGILGVGKYVPERILTNFDLEKMMETSDEWIRTRTGIEERRIARDDEYTHDLAYEAAKVAIENAGLTPNDIDLFIVATVTQEATFPSVANIIQDRLGAKNAAGMDVEAACAGFTFGVVTAAQFIKTGAYKNIVVVGADKLSKITNWDDRATAVLFGDGAGAIVMGPVSDDHGLLSFDLGSDGSGGKYLNLDENKKIYMNGREVFRFAVRQMGEASLRVLERAGLEKEDLDLLIPHQANIRIMEASRERLNLPEEKLMKTVHKYGNTSSSSIALALVDAVEEGRIKDNDNVLLVGFGGGLTWGALIIRWGK</sequence>
<name>FABH_LISW6</name>
<keyword id="KW-0012">Acyltransferase</keyword>
<keyword id="KW-0963">Cytoplasm</keyword>
<keyword id="KW-0275">Fatty acid biosynthesis</keyword>
<keyword id="KW-0276">Fatty acid metabolism</keyword>
<keyword id="KW-0444">Lipid biosynthesis</keyword>
<keyword id="KW-0443">Lipid metabolism</keyword>
<keyword id="KW-0511">Multifunctional enzyme</keyword>
<keyword id="KW-0808">Transferase</keyword>
<protein>
    <recommendedName>
        <fullName evidence="1">Beta-ketoacyl-[acyl-carrier-protein] synthase III</fullName>
        <shortName evidence="1">Beta-ketoacyl-ACP synthase III</shortName>
        <shortName evidence="1">KAS III</shortName>
        <ecNumber evidence="1">2.3.1.180</ecNumber>
    </recommendedName>
    <alternativeName>
        <fullName evidence="1">3-oxoacyl-[acyl-carrier-protein] synthase 3</fullName>
    </alternativeName>
    <alternativeName>
        <fullName evidence="1">3-oxoacyl-[acyl-carrier-protein] synthase III</fullName>
    </alternativeName>
</protein>
<comment type="function">
    <text evidence="1">Catalyzes the condensation reaction of fatty acid synthesis by the addition to an acyl acceptor of two carbons from malonyl-ACP. Catalyzes the first condensation reaction which initiates fatty acid synthesis and may therefore play a role in governing the total rate of fatty acid production. Possesses both acetoacetyl-ACP synthase and acetyl transacylase activities. Its substrate specificity determines the biosynthesis of branched-chain and/or straight-chain of fatty acids.</text>
</comment>
<comment type="catalytic activity">
    <reaction evidence="1">
        <text>malonyl-[ACP] + acetyl-CoA + H(+) = 3-oxobutanoyl-[ACP] + CO2 + CoA</text>
        <dbReference type="Rhea" id="RHEA:12080"/>
        <dbReference type="Rhea" id="RHEA-COMP:9623"/>
        <dbReference type="Rhea" id="RHEA-COMP:9625"/>
        <dbReference type="ChEBI" id="CHEBI:15378"/>
        <dbReference type="ChEBI" id="CHEBI:16526"/>
        <dbReference type="ChEBI" id="CHEBI:57287"/>
        <dbReference type="ChEBI" id="CHEBI:57288"/>
        <dbReference type="ChEBI" id="CHEBI:78449"/>
        <dbReference type="ChEBI" id="CHEBI:78450"/>
        <dbReference type="EC" id="2.3.1.180"/>
    </reaction>
</comment>
<comment type="pathway">
    <text evidence="1">Lipid metabolism; fatty acid biosynthesis.</text>
</comment>
<comment type="subunit">
    <text evidence="1">Homodimer.</text>
</comment>
<comment type="subcellular location">
    <subcellularLocation>
        <location evidence="1">Cytoplasm</location>
    </subcellularLocation>
</comment>
<comment type="domain">
    <text evidence="1">The last Arg residue of the ACP-binding site is essential for the weak association between ACP/AcpP and FabH.</text>
</comment>
<comment type="similarity">
    <text evidence="1">Belongs to the thiolase-like superfamily. FabH family.</text>
</comment>
<organism>
    <name type="scientific">Listeria welshimeri serovar 6b (strain ATCC 35897 / DSM 20650 / CCUG 15529 / CIP 8149 / NCTC 11857 / SLCC 5334 / V8)</name>
    <dbReference type="NCBI Taxonomy" id="386043"/>
    <lineage>
        <taxon>Bacteria</taxon>
        <taxon>Bacillati</taxon>
        <taxon>Bacillota</taxon>
        <taxon>Bacilli</taxon>
        <taxon>Bacillales</taxon>
        <taxon>Listeriaceae</taxon>
        <taxon>Listeria</taxon>
    </lineage>
</organism>
<reference key="1">
    <citation type="journal article" date="2006" name="J. Bacteriol.">
        <title>Whole-genome sequence of Listeria welshimeri reveals common steps in genome reduction with Listeria innocua as compared to Listeria monocytogenes.</title>
        <authorList>
            <person name="Hain T."/>
            <person name="Steinweg C."/>
            <person name="Kuenne C.T."/>
            <person name="Billion A."/>
            <person name="Ghai R."/>
            <person name="Chatterjee S.S."/>
            <person name="Domann E."/>
            <person name="Kaerst U."/>
            <person name="Goesmann A."/>
            <person name="Bekel T."/>
            <person name="Bartels D."/>
            <person name="Kaiser O."/>
            <person name="Meyer F."/>
            <person name="Puehler A."/>
            <person name="Weisshaar B."/>
            <person name="Wehland J."/>
            <person name="Liang C."/>
            <person name="Dandekar T."/>
            <person name="Lampidis R."/>
            <person name="Kreft J."/>
            <person name="Goebel W."/>
            <person name="Chakraborty T."/>
        </authorList>
    </citation>
    <scope>NUCLEOTIDE SEQUENCE [LARGE SCALE GENOMIC DNA]</scope>
    <source>
        <strain>ATCC 35897 / DSM 20650 / CCUG 15529 / CIP 8149 / NCTC 11857 / SLCC 5334 / V8</strain>
    </source>
</reference>
<dbReference type="EC" id="2.3.1.180" evidence="1"/>
<dbReference type="EMBL" id="AM263198">
    <property type="protein sequence ID" value="CAK21637.1"/>
    <property type="molecule type" value="Genomic_DNA"/>
</dbReference>
<dbReference type="RefSeq" id="WP_011702971.1">
    <property type="nucleotide sequence ID" value="NC_008555.1"/>
</dbReference>
<dbReference type="SMR" id="A0AKV5"/>
<dbReference type="STRING" id="386043.lwe2219"/>
<dbReference type="GeneID" id="61190122"/>
<dbReference type="KEGG" id="lwe:lwe2219"/>
<dbReference type="eggNOG" id="COG0332">
    <property type="taxonomic scope" value="Bacteria"/>
</dbReference>
<dbReference type="HOGENOM" id="CLU_039592_3_1_9"/>
<dbReference type="OrthoDB" id="9815506at2"/>
<dbReference type="UniPathway" id="UPA00094"/>
<dbReference type="Proteomes" id="UP000000779">
    <property type="component" value="Chromosome"/>
</dbReference>
<dbReference type="GO" id="GO:0005737">
    <property type="term" value="C:cytoplasm"/>
    <property type="evidence" value="ECO:0007669"/>
    <property type="project" value="UniProtKB-SubCell"/>
</dbReference>
<dbReference type="GO" id="GO:0004315">
    <property type="term" value="F:3-oxoacyl-[acyl-carrier-protein] synthase activity"/>
    <property type="evidence" value="ECO:0007669"/>
    <property type="project" value="InterPro"/>
</dbReference>
<dbReference type="GO" id="GO:0033818">
    <property type="term" value="F:beta-ketoacyl-acyl-carrier-protein synthase III activity"/>
    <property type="evidence" value="ECO:0007669"/>
    <property type="project" value="UniProtKB-UniRule"/>
</dbReference>
<dbReference type="GO" id="GO:0006633">
    <property type="term" value="P:fatty acid biosynthetic process"/>
    <property type="evidence" value="ECO:0007669"/>
    <property type="project" value="UniProtKB-UniRule"/>
</dbReference>
<dbReference type="CDD" id="cd00830">
    <property type="entry name" value="KAS_III"/>
    <property type="match status" value="1"/>
</dbReference>
<dbReference type="FunFam" id="3.40.47.10:FF:000004">
    <property type="entry name" value="3-oxoacyl-[acyl-carrier-protein] synthase 3"/>
    <property type="match status" value="1"/>
</dbReference>
<dbReference type="Gene3D" id="3.40.47.10">
    <property type="match status" value="1"/>
</dbReference>
<dbReference type="HAMAP" id="MF_01815">
    <property type="entry name" value="FabH"/>
    <property type="match status" value="1"/>
</dbReference>
<dbReference type="InterPro" id="IPR013747">
    <property type="entry name" value="ACP_syn_III_C"/>
</dbReference>
<dbReference type="InterPro" id="IPR013751">
    <property type="entry name" value="ACP_syn_III_N"/>
</dbReference>
<dbReference type="InterPro" id="IPR004655">
    <property type="entry name" value="FabH"/>
</dbReference>
<dbReference type="InterPro" id="IPR016039">
    <property type="entry name" value="Thiolase-like"/>
</dbReference>
<dbReference type="NCBIfam" id="TIGR00747">
    <property type="entry name" value="fabH"/>
    <property type="match status" value="1"/>
</dbReference>
<dbReference type="NCBIfam" id="NF006829">
    <property type="entry name" value="PRK09352.1"/>
    <property type="match status" value="1"/>
</dbReference>
<dbReference type="PANTHER" id="PTHR43091">
    <property type="entry name" value="3-OXOACYL-[ACYL-CARRIER-PROTEIN] SYNTHASE"/>
    <property type="match status" value="1"/>
</dbReference>
<dbReference type="PANTHER" id="PTHR43091:SF1">
    <property type="entry name" value="BETA-KETOACYL-[ACYL-CARRIER-PROTEIN] SYNTHASE III, CHLOROPLASTIC"/>
    <property type="match status" value="1"/>
</dbReference>
<dbReference type="Pfam" id="PF08545">
    <property type="entry name" value="ACP_syn_III"/>
    <property type="match status" value="1"/>
</dbReference>
<dbReference type="Pfam" id="PF08541">
    <property type="entry name" value="ACP_syn_III_C"/>
    <property type="match status" value="1"/>
</dbReference>
<dbReference type="SUPFAM" id="SSF53901">
    <property type="entry name" value="Thiolase-like"/>
    <property type="match status" value="1"/>
</dbReference>
<proteinExistence type="inferred from homology"/>
<feature type="chain" id="PRO_1000056374" description="Beta-ketoacyl-[acyl-carrier-protein] synthase III">
    <location>
        <begin position="1"/>
        <end position="312"/>
    </location>
</feature>
<feature type="region of interest" description="ACP-binding" evidence="1">
    <location>
        <begin position="238"/>
        <end position="242"/>
    </location>
</feature>
<feature type="active site" evidence="1">
    <location>
        <position position="112"/>
    </location>
</feature>
<feature type="active site" evidence="1">
    <location>
        <position position="237"/>
    </location>
</feature>
<feature type="active site" evidence="1">
    <location>
        <position position="267"/>
    </location>
</feature>